<protein>
    <recommendedName>
        <fullName evidence="1">Glycogen debranching enzyme</fullName>
        <ecNumber evidence="1">3.2.1.196</ecNumber>
    </recommendedName>
    <alternativeName>
        <fullName evidence="1">Limit dextrin alpha-1,6-maltotetraose-hydrolase</fullName>
    </alternativeName>
</protein>
<proteinExistence type="inferred from homology"/>
<keyword id="KW-0119">Carbohydrate metabolism</keyword>
<keyword id="KW-0321">Glycogen metabolism</keyword>
<keyword id="KW-0326">Glycosidase</keyword>
<keyword id="KW-0378">Hydrolase</keyword>
<keyword id="KW-1185">Reference proteome</keyword>
<accession>B7L4W3</accession>
<reference key="1">
    <citation type="journal article" date="2009" name="PLoS Genet.">
        <title>Organised genome dynamics in the Escherichia coli species results in highly diverse adaptive paths.</title>
        <authorList>
            <person name="Touchon M."/>
            <person name="Hoede C."/>
            <person name="Tenaillon O."/>
            <person name="Barbe V."/>
            <person name="Baeriswyl S."/>
            <person name="Bidet P."/>
            <person name="Bingen E."/>
            <person name="Bonacorsi S."/>
            <person name="Bouchier C."/>
            <person name="Bouvet O."/>
            <person name="Calteau A."/>
            <person name="Chiapello H."/>
            <person name="Clermont O."/>
            <person name="Cruveiller S."/>
            <person name="Danchin A."/>
            <person name="Diard M."/>
            <person name="Dossat C."/>
            <person name="Karoui M.E."/>
            <person name="Frapy E."/>
            <person name="Garry L."/>
            <person name="Ghigo J.M."/>
            <person name="Gilles A.M."/>
            <person name="Johnson J."/>
            <person name="Le Bouguenec C."/>
            <person name="Lescat M."/>
            <person name="Mangenot S."/>
            <person name="Martinez-Jehanne V."/>
            <person name="Matic I."/>
            <person name="Nassif X."/>
            <person name="Oztas S."/>
            <person name="Petit M.A."/>
            <person name="Pichon C."/>
            <person name="Rouy Z."/>
            <person name="Ruf C.S."/>
            <person name="Schneider D."/>
            <person name="Tourret J."/>
            <person name="Vacherie B."/>
            <person name="Vallenet D."/>
            <person name="Medigue C."/>
            <person name="Rocha E.P.C."/>
            <person name="Denamur E."/>
        </authorList>
    </citation>
    <scope>NUCLEOTIDE SEQUENCE [LARGE SCALE GENOMIC DNA]</scope>
    <source>
        <strain>55989 / EAEC</strain>
    </source>
</reference>
<feature type="chain" id="PRO_1000165055" description="Glycogen debranching enzyme">
    <location>
        <begin position="1"/>
        <end position="657"/>
    </location>
</feature>
<feature type="region of interest" description="Disordered" evidence="2">
    <location>
        <begin position="458"/>
        <end position="479"/>
    </location>
</feature>
<feature type="compositionally biased region" description="Basic and acidic residues" evidence="2">
    <location>
        <begin position="458"/>
        <end position="467"/>
    </location>
</feature>
<feature type="active site" description="Nucleophile" evidence="1">
    <location>
        <position position="336"/>
    </location>
</feature>
<feature type="active site" description="Proton donor" evidence="1">
    <location>
        <position position="371"/>
    </location>
</feature>
<feature type="site" description="Transition state stabilizer" evidence="1">
    <location>
        <position position="443"/>
    </location>
</feature>
<sequence>MTQLAIGKPAPLGAHYDGQGVNFTLFSAHAERVELCVFDANGQEHRYDLPGHSGDIWHGYLPDARPGLRYGYRVHGPWQPAEGHRFNPAKLLIDPCARQIEGEFKDNPLLHAGHNEPDYRDNAAIAPKCVVVVDHYDWEDDAPPRTPWGSTIIYEAHVKGLTYLHPEIPVEIRGTYKALGHPVMINYLKQLGITALELLPVAQFASEPRLQRMGLSNYWGYNPVAMFALHPAYACSPETALDEFRDAIKALHKAGIEVILDIVLNHSAELDLDGPLFSLRGIDNRSYYWIREDGDYHNWTGCGNTLNLSHPAVVDYASACLRYWVETCHVDGFRFDLAAVMGRTPEFRQDAPLFTAIQNCPVLSQVKLIAEPWDIAPGGYQVGNFPPLFAEWNDHFRDAARRFWLHYDLPLGAFAGRFAASSDVFKRNGRLPSAAINLVTAHDGFTLRDCVCFNHKHNEANGEENRDGTNNNYSNNHGKEGLGGSLDLVERRRDSIHALLTTLLLSQGTPMLLAGDEHGHSQHGNNNAYCQDNQLTWLDWSQASSGLTAFTAALIHLRKRIPALVENRWWEEGDGNVRWLNRYAQPLSTDEWQNGPKQLQILLSDRFLIAINATLEVTEIVLPAGEWHAIPPFAGEDNPVITAVWQGPAHGLCVFQR</sequence>
<evidence type="ECO:0000255" key="1">
    <source>
        <dbReference type="HAMAP-Rule" id="MF_01248"/>
    </source>
</evidence>
<evidence type="ECO:0000256" key="2">
    <source>
        <dbReference type="SAM" id="MobiDB-lite"/>
    </source>
</evidence>
<dbReference type="EC" id="3.2.1.196" evidence="1"/>
<dbReference type="EMBL" id="CU928145">
    <property type="protein sequence ID" value="CAV00217.1"/>
    <property type="molecule type" value="Genomic_DNA"/>
</dbReference>
<dbReference type="RefSeq" id="WP_000192552.1">
    <property type="nucleotide sequence ID" value="NC_011748.1"/>
</dbReference>
<dbReference type="SMR" id="B7L4W3"/>
<dbReference type="CAZy" id="CBM48">
    <property type="family name" value="Carbohydrate-Binding Module Family 48"/>
</dbReference>
<dbReference type="CAZy" id="GH13">
    <property type="family name" value="Glycoside Hydrolase Family 13"/>
</dbReference>
<dbReference type="KEGG" id="eck:EC55989_3841"/>
<dbReference type="HOGENOM" id="CLU_011725_1_1_6"/>
<dbReference type="UniPathway" id="UPA00165"/>
<dbReference type="Proteomes" id="UP000000746">
    <property type="component" value="Chromosome"/>
</dbReference>
<dbReference type="GO" id="GO:0004133">
    <property type="term" value="F:glycogen debranching enzyme activity"/>
    <property type="evidence" value="ECO:0007669"/>
    <property type="project" value="UniProtKB-UniRule"/>
</dbReference>
<dbReference type="GO" id="GO:0004553">
    <property type="term" value="F:hydrolase activity, hydrolyzing O-glycosyl compounds"/>
    <property type="evidence" value="ECO:0007669"/>
    <property type="project" value="InterPro"/>
</dbReference>
<dbReference type="GO" id="GO:0005980">
    <property type="term" value="P:glycogen catabolic process"/>
    <property type="evidence" value="ECO:0007669"/>
    <property type="project" value="UniProtKB-UniRule"/>
</dbReference>
<dbReference type="CDD" id="cd11326">
    <property type="entry name" value="AmyAc_Glg_debranch"/>
    <property type="match status" value="1"/>
</dbReference>
<dbReference type="CDD" id="cd02856">
    <property type="entry name" value="E_set_GDE_Isoamylase_N"/>
    <property type="match status" value="1"/>
</dbReference>
<dbReference type="FunFam" id="2.60.40.10:FF:000468">
    <property type="entry name" value="Glycogen debranching enzyme"/>
    <property type="match status" value="1"/>
</dbReference>
<dbReference type="FunFam" id="3.20.20.80:FF:000031">
    <property type="entry name" value="Glycogen debranching enzyme"/>
    <property type="match status" value="1"/>
</dbReference>
<dbReference type="Gene3D" id="3.20.20.80">
    <property type="entry name" value="Glycosidases"/>
    <property type="match status" value="1"/>
</dbReference>
<dbReference type="Gene3D" id="2.60.40.1180">
    <property type="entry name" value="Golgi alpha-mannosidase II"/>
    <property type="match status" value="1"/>
</dbReference>
<dbReference type="Gene3D" id="2.60.40.10">
    <property type="entry name" value="Immunoglobulins"/>
    <property type="match status" value="1"/>
</dbReference>
<dbReference type="HAMAP" id="MF_01248">
    <property type="entry name" value="GlgX"/>
    <property type="match status" value="1"/>
</dbReference>
<dbReference type="InterPro" id="IPR040784">
    <property type="entry name" value="GlgX_C"/>
</dbReference>
<dbReference type="InterPro" id="IPR044505">
    <property type="entry name" value="GlgX_Isoamylase_N_E_set"/>
</dbReference>
<dbReference type="InterPro" id="IPR006047">
    <property type="entry name" value="Glyco_hydro_13_cat_dom"/>
</dbReference>
<dbReference type="InterPro" id="IPR004193">
    <property type="entry name" value="Glyco_hydro_13_N"/>
</dbReference>
<dbReference type="InterPro" id="IPR013780">
    <property type="entry name" value="Glyco_hydro_b"/>
</dbReference>
<dbReference type="InterPro" id="IPR022844">
    <property type="entry name" value="Glycogen_debranch_bac"/>
</dbReference>
<dbReference type="InterPro" id="IPR011837">
    <property type="entry name" value="Glycogen_debranch_GlgX"/>
</dbReference>
<dbReference type="InterPro" id="IPR017853">
    <property type="entry name" value="Glycoside_hydrolase_SF"/>
</dbReference>
<dbReference type="InterPro" id="IPR013783">
    <property type="entry name" value="Ig-like_fold"/>
</dbReference>
<dbReference type="InterPro" id="IPR014756">
    <property type="entry name" value="Ig_E-set"/>
</dbReference>
<dbReference type="NCBIfam" id="TIGR02100">
    <property type="entry name" value="glgX_debranch"/>
    <property type="match status" value="1"/>
</dbReference>
<dbReference type="NCBIfam" id="NF002983">
    <property type="entry name" value="PRK03705.1"/>
    <property type="match status" value="1"/>
</dbReference>
<dbReference type="PANTHER" id="PTHR43002">
    <property type="entry name" value="GLYCOGEN DEBRANCHING ENZYME"/>
    <property type="match status" value="1"/>
</dbReference>
<dbReference type="Pfam" id="PF00128">
    <property type="entry name" value="Alpha-amylase"/>
    <property type="match status" value="1"/>
</dbReference>
<dbReference type="Pfam" id="PF02922">
    <property type="entry name" value="CBM_48"/>
    <property type="match status" value="1"/>
</dbReference>
<dbReference type="Pfam" id="PF18390">
    <property type="entry name" value="GlgX_C"/>
    <property type="match status" value="1"/>
</dbReference>
<dbReference type="SMART" id="SM00642">
    <property type="entry name" value="Aamy"/>
    <property type="match status" value="1"/>
</dbReference>
<dbReference type="SUPFAM" id="SSF51445">
    <property type="entry name" value="(Trans)glycosidases"/>
    <property type="match status" value="1"/>
</dbReference>
<dbReference type="SUPFAM" id="SSF81296">
    <property type="entry name" value="E set domains"/>
    <property type="match status" value="1"/>
</dbReference>
<gene>
    <name evidence="1" type="primary">glgX</name>
    <name type="ordered locus">EC55989_3841</name>
</gene>
<organism>
    <name type="scientific">Escherichia coli (strain 55989 / EAEC)</name>
    <dbReference type="NCBI Taxonomy" id="585055"/>
    <lineage>
        <taxon>Bacteria</taxon>
        <taxon>Pseudomonadati</taxon>
        <taxon>Pseudomonadota</taxon>
        <taxon>Gammaproteobacteria</taxon>
        <taxon>Enterobacterales</taxon>
        <taxon>Enterobacteriaceae</taxon>
        <taxon>Escherichia</taxon>
    </lineage>
</organism>
<name>GLGX_ECO55</name>
<comment type="function">
    <text evidence="1">Removes maltotriose and maltotetraose chains that are attached by 1,6-alpha-linkage to the limit dextrin main chain, generating a debranched limit dextrin.</text>
</comment>
<comment type="catalytic activity">
    <reaction evidence="1">
        <text>Hydrolysis of (1-&gt;6)-alpha-D-glucosidic linkages to branches with degrees of polymerization of three or four glucose residues in limit dextrin.</text>
        <dbReference type="EC" id="3.2.1.196"/>
    </reaction>
</comment>
<comment type="pathway">
    <text evidence="1">Glycan degradation; glycogen degradation.</text>
</comment>
<comment type="similarity">
    <text evidence="1">Belongs to the glycosyl hydrolase 13 family.</text>
</comment>